<organism>
    <name type="scientific">Saccharomyces cerevisiae (strain ATCC 204508 / S288c)</name>
    <name type="common">Baker's yeast</name>
    <dbReference type="NCBI Taxonomy" id="559292"/>
    <lineage>
        <taxon>Eukaryota</taxon>
        <taxon>Fungi</taxon>
        <taxon>Dikarya</taxon>
        <taxon>Ascomycota</taxon>
        <taxon>Saccharomycotina</taxon>
        <taxon>Saccharomycetes</taxon>
        <taxon>Saccharomycetales</taxon>
        <taxon>Saccharomycetaceae</taxon>
        <taxon>Saccharomyces</taxon>
    </lineage>
</organism>
<sequence length="210" mass="20728">MSVSKIAFVLSAIASLAVADTSAAETAELQAIIGDINSHLSDYLGLETGNSGFQIPSDVLSVYQQVMTYTDDAYTTLFSELDFDAITKTIVKLPWYTTRLSSEIAAALASVSPASSEAASSSEAASSSKAASSSEATSSAAPSSSAAPSSSAAPSSSAESSSKAVSSSVAPTTSSVSTSTVETASNAGQRVNAGAASFGAVVAGAAALLL</sequence>
<reference key="1">
    <citation type="journal article" date="1991" name="J. Biol. Chem.">
        <title>TIP 1, a cold shock-inducible gene of Saccharomyces cerevisiae.</title>
        <authorList>
            <person name="Kondo K."/>
            <person name="Inouye M."/>
        </authorList>
    </citation>
    <scope>NUCLEOTIDE SEQUENCE [GENOMIC DNA]</scope>
</reference>
<reference key="2">
    <citation type="journal article" date="1994" name="EMBO J.">
        <title>Complete DNA sequence of yeast chromosome II.</title>
        <authorList>
            <person name="Feldmann H."/>
            <person name="Aigle M."/>
            <person name="Aljinovic G."/>
            <person name="Andre B."/>
            <person name="Baclet M.C."/>
            <person name="Barthe C."/>
            <person name="Baur A."/>
            <person name="Becam A.-M."/>
            <person name="Biteau N."/>
            <person name="Boles E."/>
            <person name="Brandt T."/>
            <person name="Brendel M."/>
            <person name="Brueckner M."/>
            <person name="Bussereau F."/>
            <person name="Christiansen C."/>
            <person name="Contreras R."/>
            <person name="Crouzet M."/>
            <person name="Cziepluch C."/>
            <person name="Demolis N."/>
            <person name="Delaveau T."/>
            <person name="Doignon F."/>
            <person name="Domdey H."/>
            <person name="Duesterhus S."/>
            <person name="Dubois E."/>
            <person name="Dujon B."/>
            <person name="El Bakkoury M."/>
            <person name="Entian K.-D."/>
            <person name="Feuermann M."/>
            <person name="Fiers W."/>
            <person name="Fobo G.M."/>
            <person name="Fritz C."/>
            <person name="Gassenhuber J."/>
            <person name="Glansdorff N."/>
            <person name="Goffeau A."/>
            <person name="Grivell L.A."/>
            <person name="de Haan M."/>
            <person name="Hein C."/>
            <person name="Herbert C.J."/>
            <person name="Hollenberg C.P."/>
            <person name="Holmstroem K."/>
            <person name="Jacq C."/>
            <person name="Jacquet M."/>
            <person name="Jauniaux J.-C."/>
            <person name="Jonniaux J.-L."/>
            <person name="Kallesoee T."/>
            <person name="Kiesau P."/>
            <person name="Kirchrath L."/>
            <person name="Koetter P."/>
            <person name="Korol S."/>
            <person name="Liebl S."/>
            <person name="Logghe M."/>
            <person name="Lohan A.J.E."/>
            <person name="Louis E.J."/>
            <person name="Li Z.Y."/>
            <person name="Maat M.J."/>
            <person name="Mallet L."/>
            <person name="Mannhaupt G."/>
            <person name="Messenguy F."/>
            <person name="Miosga T."/>
            <person name="Molemans F."/>
            <person name="Mueller S."/>
            <person name="Nasr F."/>
            <person name="Obermaier B."/>
            <person name="Perea J."/>
            <person name="Pierard A."/>
            <person name="Piravandi E."/>
            <person name="Pohl F.M."/>
            <person name="Pohl T.M."/>
            <person name="Potier S."/>
            <person name="Proft M."/>
            <person name="Purnelle B."/>
            <person name="Ramezani Rad M."/>
            <person name="Rieger M."/>
            <person name="Rose M."/>
            <person name="Schaaff-Gerstenschlaeger I."/>
            <person name="Scherens B."/>
            <person name="Schwarzlose C."/>
            <person name="Skala J."/>
            <person name="Slonimski P.P."/>
            <person name="Smits P.H.M."/>
            <person name="Souciet J.-L."/>
            <person name="Steensma H.Y."/>
            <person name="Stucka R."/>
            <person name="Urrestarazu L.A."/>
            <person name="van der Aart Q.J.M."/>
            <person name="Van Dyck L."/>
            <person name="Vassarotti A."/>
            <person name="Vetter I."/>
            <person name="Vierendeels F."/>
            <person name="Vissers S."/>
            <person name="Wagner G."/>
            <person name="de Wergifosse P."/>
            <person name="Wolfe K.H."/>
            <person name="Zagulski M."/>
            <person name="Zimmermann F.K."/>
            <person name="Mewes H.-W."/>
            <person name="Kleine K."/>
        </authorList>
    </citation>
    <scope>NUCLEOTIDE SEQUENCE [LARGE SCALE GENOMIC DNA]</scope>
    <source>
        <strain>ATCC 204508 / S288c</strain>
    </source>
</reference>
<reference key="3">
    <citation type="journal article" date="2014" name="G3 (Bethesda)">
        <title>The reference genome sequence of Saccharomyces cerevisiae: Then and now.</title>
        <authorList>
            <person name="Engel S.R."/>
            <person name="Dietrich F.S."/>
            <person name="Fisk D.G."/>
            <person name="Binkley G."/>
            <person name="Balakrishnan R."/>
            <person name="Costanzo M.C."/>
            <person name="Dwight S.S."/>
            <person name="Hitz B.C."/>
            <person name="Karra K."/>
            <person name="Nash R.S."/>
            <person name="Weng S."/>
            <person name="Wong E.D."/>
            <person name="Lloyd P."/>
            <person name="Skrzypek M.S."/>
            <person name="Miyasato S.R."/>
            <person name="Simison M."/>
            <person name="Cherry J.M."/>
        </authorList>
    </citation>
    <scope>GENOME REANNOTATION</scope>
    <source>
        <strain>ATCC 204508 / S288c</strain>
    </source>
</reference>
<reference key="4">
    <citation type="journal article" date="1995" name="Mol. Microbiol.">
        <title>Cold-shock induction of a family of TIP1-related proteins associated with the membrane in Saccharomyces cerevisiae.</title>
        <authorList>
            <person name="Kowalski L.R.Z."/>
            <person name="Kondo K."/>
            <person name="Inouye M."/>
        </authorList>
    </citation>
    <scope>PROTEIN SEQUENCE OF 20-48</scope>
    <scope>GLYCOSYLATION</scope>
    <scope>INDUCTION</scope>
</reference>
<reference key="5">
    <citation type="journal article" date="1999" name="Biochim. Biophys. Acta">
        <title>Structure of the glucan-binding sugar chain of Tip1p, a cell wall protein of Saccharomyces cerevisiae.</title>
        <authorList>
            <person name="Fujii T."/>
            <person name="Shimoi H."/>
            <person name="Iimura Y."/>
        </authorList>
    </citation>
    <scope>PROTEIN SEQUENCE OF 20-48 AND 90-100</scope>
    <scope>PROTEIN SEQUENCE OF 130-148 AND 164-186</scope>
    <scope>GPI-ANCHOR AT ASN-186</scope>
</reference>
<reference key="6">
    <citation type="journal article" date="1995" name="J. Bacteriol.">
        <title>Identification of three mannoproteins in the cell wall of Saccharomyces cerevisiae.</title>
        <authorList>
            <person name="van der Vaart J.M."/>
            <person name="Caro L.H.P."/>
            <person name="Chapman J.W."/>
            <person name="Klis F.M."/>
            <person name="Verrips C.T."/>
        </authorList>
    </citation>
    <scope>PROTEIN SEQUENCE OF 20-34</scope>
    <scope>GLYCOSYLATION</scope>
    <scope>SUBCELLULAR LOCATION</scope>
</reference>
<reference key="7">
    <citation type="journal article" date="1998" name="Yeast">
        <title>A novel esterase from Saccharomyces carlsbergensis, a possible function for the yeast TIP1 gene.</title>
        <authorList>
            <person name="Horsted M.W."/>
            <person name="Dey E.S."/>
            <person name="Holmberg S."/>
            <person name="Kielland-Brandt M.C."/>
        </authorList>
    </citation>
    <scope>PROTEIN SEQUENCE OF 20-41</scope>
    <scope>CHARACTERIZATION</scope>
    <scope>MASS SPECTROMETRY</scope>
    <source>
        <strain>Carlsbergensis / BK2539</strain>
    </source>
</reference>
<reference key="8">
    <citation type="journal article" date="2001" name="J. Bacteriol.">
        <title>Reciprocal regulation of anaerobic and aerobic cell wall mannoprotein gene expression in Saccharomyces cerevisiae.</title>
        <authorList>
            <person name="Abramova N.E."/>
            <person name="Sertil O."/>
            <person name="Mehta S."/>
            <person name="Lowry C.V."/>
        </authorList>
    </citation>
    <scope>INDUCTION</scope>
</reference>
<reference key="9">
    <citation type="journal article" date="2003" name="Nature">
        <title>Global analysis of protein expression in yeast.</title>
        <authorList>
            <person name="Ghaemmaghami S."/>
            <person name="Huh W.-K."/>
            <person name="Bower K."/>
            <person name="Howson R.W."/>
            <person name="Belle A."/>
            <person name="Dephoure N."/>
            <person name="O'Shea E.K."/>
            <person name="Weissman J.S."/>
        </authorList>
    </citation>
    <scope>LEVEL OF PROTEIN EXPRESSION [LARGE SCALE ANALYSIS]</scope>
</reference>
<reference key="10">
    <citation type="journal article" date="2005" name="J. Biol. Chem.">
        <title>Comprehensive proteomic analysis of Saccharomyces cerevisiae cell walls: identification of proteins covalently attached via glycosylphosphatidylinositol remnants or mild alkali-sensitive linkages.</title>
        <authorList>
            <person name="Yin Q.Y."/>
            <person name="de Groot P.W.J."/>
            <person name="Dekker H.L."/>
            <person name="de Jong L."/>
            <person name="Klis F.M."/>
            <person name="de Koster C.G."/>
        </authorList>
    </citation>
    <scope>SUBCELLULAR LOCATION</scope>
    <scope>IDENTIFICATION BY MASS SPECTROMETRY</scope>
    <scope>GPI-ANCHOR</scope>
</reference>
<reference key="11">
    <citation type="journal article" date="2006" name="Mol. Biol. Cell">
        <title>Role of cell cycle-regulated expression in the localized incorporation of cell wall proteins in yeast.</title>
        <authorList>
            <person name="Smits G.J."/>
            <person name="Schenkman L.R."/>
            <person name="Brul S."/>
            <person name="Pringle J.R."/>
            <person name="Klis F.M."/>
        </authorList>
    </citation>
    <scope>SUBCELLULAR LOCATION</scope>
</reference>
<dbReference type="EC" id="3.1.1.-"/>
<dbReference type="EMBL" id="M71216">
    <property type="protein sequence ID" value="AAA35157.1"/>
    <property type="molecule type" value="Genomic_DNA"/>
</dbReference>
<dbReference type="EMBL" id="Z35936">
    <property type="protein sequence ID" value="CAA85011.1"/>
    <property type="molecule type" value="Genomic_DNA"/>
</dbReference>
<dbReference type="EMBL" id="BK006936">
    <property type="protein sequence ID" value="DAA07186.1"/>
    <property type="molecule type" value="Genomic_DNA"/>
</dbReference>
<dbReference type="PIR" id="A40979">
    <property type="entry name" value="A40979"/>
</dbReference>
<dbReference type="RefSeq" id="NP_009623.1">
    <property type="nucleotide sequence ID" value="NM_001178415.1"/>
</dbReference>
<dbReference type="BioGRID" id="32770">
    <property type="interactions" value="46"/>
</dbReference>
<dbReference type="DIP" id="DIP-4908N"/>
<dbReference type="FunCoup" id="P27654">
    <property type="interactions" value="116"/>
</dbReference>
<dbReference type="IntAct" id="P27654">
    <property type="interactions" value="6"/>
</dbReference>
<dbReference type="MINT" id="P27654"/>
<dbReference type="STRING" id="4932.YBR067C"/>
<dbReference type="GlyGen" id="P27654">
    <property type="glycosylation" value="1 site"/>
</dbReference>
<dbReference type="PaxDb" id="4932-YBR067C"/>
<dbReference type="PeptideAtlas" id="P27654"/>
<dbReference type="EnsemblFungi" id="YBR067C_mRNA">
    <property type="protein sequence ID" value="YBR067C"/>
    <property type="gene ID" value="YBR067C"/>
</dbReference>
<dbReference type="GeneID" id="852359"/>
<dbReference type="KEGG" id="sce:YBR067C"/>
<dbReference type="AGR" id="SGD:S000000271"/>
<dbReference type="SGD" id="S000000271">
    <property type="gene designation" value="TIP1"/>
</dbReference>
<dbReference type="VEuPathDB" id="FungiDB:YBR067C"/>
<dbReference type="eggNOG" id="ENOG502RZ9R">
    <property type="taxonomic scope" value="Eukaryota"/>
</dbReference>
<dbReference type="GeneTree" id="ENSGT00940000176276"/>
<dbReference type="HOGENOM" id="CLU_071083_1_1_1"/>
<dbReference type="InParanoid" id="P27654"/>
<dbReference type="OMA" id="ATELPWY"/>
<dbReference type="OrthoDB" id="4069694at2759"/>
<dbReference type="BioCyc" id="YEAST:G3O-29036-MONOMER"/>
<dbReference type="BioGRID-ORCS" id="852359">
    <property type="hits" value="1 hit in 10 CRISPR screens"/>
</dbReference>
<dbReference type="PRO" id="PR:P27654"/>
<dbReference type="Proteomes" id="UP000002311">
    <property type="component" value="Chromosome II"/>
</dbReference>
<dbReference type="RNAct" id="P27654">
    <property type="molecule type" value="protein"/>
</dbReference>
<dbReference type="GO" id="GO:0071944">
    <property type="term" value="C:cell periphery"/>
    <property type="evidence" value="ECO:0007005"/>
    <property type="project" value="SGD"/>
</dbReference>
<dbReference type="GO" id="GO:0005829">
    <property type="term" value="C:cytosol"/>
    <property type="evidence" value="ECO:0007005"/>
    <property type="project" value="SGD"/>
</dbReference>
<dbReference type="GO" id="GO:0005576">
    <property type="term" value="C:extracellular region"/>
    <property type="evidence" value="ECO:0007669"/>
    <property type="project" value="UniProtKB-KW"/>
</dbReference>
<dbReference type="GO" id="GO:0009277">
    <property type="term" value="C:fungal-type cell wall"/>
    <property type="evidence" value="ECO:0000314"/>
    <property type="project" value="SGD"/>
</dbReference>
<dbReference type="GO" id="GO:0098552">
    <property type="term" value="C:side of membrane"/>
    <property type="evidence" value="ECO:0007669"/>
    <property type="project" value="UniProtKB-KW"/>
</dbReference>
<dbReference type="GO" id="GO:0016298">
    <property type="term" value="F:lipase activity"/>
    <property type="evidence" value="ECO:0000314"/>
    <property type="project" value="SGD"/>
</dbReference>
<dbReference type="GO" id="GO:0005199">
    <property type="term" value="F:structural constituent of cell wall"/>
    <property type="evidence" value="ECO:0000314"/>
    <property type="project" value="SGD"/>
</dbReference>
<dbReference type="GO" id="GO:0031505">
    <property type="term" value="P:fungal-type cell wall organization"/>
    <property type="evidence" value="ECO:0000314"/>
    <property type="project" value="SGD"/>
</dbReference>
<dbReference type="InterPro" id="IPR000992">
    <property type="entry name" value="SRP1_TIP1"/>
</dbReference>
<dbReference type="InterPro" id="IPR050788">
    <property type="entry name" value="Yeast_SRP1/TIP1_CWP"/>
</dbReference>
<dbReference type="PANTHER" id="PTHR31002:SF34">
    <property type="entry name" value="CELL WALL PROTEIN CWP1-RELATED"/>
    <property type="match status" value="1"/>
</dbReference>
<dbReference type="PANTHER" id="PTHR31002">
    <property type="entry name" value="SERIPAUPERIN"/>
    <property type="match status" value="1"/>
</dbReference>
<dbReference type="Pfam" id="PF00660">
    <property type="entry name" value="SRP1_TIP1"/>
    <property type="match status" value="1"/>
</dbReference>
<dbReference type="PROSITE" id="PS00724">
    <property type="entry name" value="SRP1_TIP1"/>
    <property type="match status" value="1"/>
</dbReference>
<feature type="signal peptide" evidence="2 5 6 7">
    <location>
        <begin position="1"/>
        <end position="19"/>
    </location>
</feature>
<feature type="chain" id="PRO_0000033237" description="Temperature shock-inducible protein 1">
    <location>
        <begin position="20"/>
        <end position="186"/>
    </location>
</feature>
<feature type="propeptide" id="PRO_0000033238" description="Removed in mature form">
    <location>
        <begin position="187"/>
        <end position="210"/>
    </location>
</feature>
<feature type="region of interest" description="Disordered" evidence="1">
    <location>
        <begin position="122"/>
        <end position="186"/>
    </location>
</feature>
<feature type="lipid moiety-binding region" description="GPI-anchor amidated asparagine" evidence="2">
    <location>
        <position position="186"/>
    </location>
</feature>
<accession>P27654</accession>
<accession>D6VQ66</accession>
<comment type="function">
    <text>Seems to have esterase activity. Prefers ester of fatty acids from 4 to 16 carbon atoms.</text>
</comment>
<comment type="subcellular location">
    <subcellularLocation>
        <location>Secreted</location>
        <location>Cell wall</location>
    </subcellularLocation>
    <subcellularLocation>
        <location>Membrane</location>
        <topology>Lipid-anchor</topology>
        <topology>GPI-anchor</topology>
    </subcellularLocation>
    <text>Covalently-linked GPI-modified cell wall protein (GPI-CWP) found only in mother cells.</text>
</comment>
<comment type="induction">
    <text evidence="3 5">Induced during anaerobic growth and by cold shock and heat shock.</text>
</comment>
<comment type="PTM">
    <text evidence="5 6">Extensively O-glycosylated.</text>
</comment>
<comment type="PTM">
    <text>The GPI-anchor is attached to the protein in the endoplasmic reticulum and serves to target the protein to the cell surface. There, the glucosamine-inositol phospholipid moiety is cleaved off and the GPI-modified mannoprotein is covalently attached via its lipidless GPI glycan remnant to the 1,6-beta-glucan of the outer cell wall layer.</text>
</comment>
<comment type="mass spectrometry" mass="16944.0" method="MALDI" evidence="7"/>
<comment type="miscellaneous">
    <text evidence="4">Present with 35600 molecules/cell in log phase SD medium.</text>
</comment>
<comment type="similarity">
    <text evidence="8">Belongs to the SRP1/TIP1 family.</text>
</comment>
<gene>
    <name type="primary">TIP1</name>
    <name type="ordered locus">YBR067C</name>
    <name type="ORF">YBR0622</name>
</gene>
<evidence type="ECO:0000256" key="1">
    <source>
        <dbReference type="SAM" id="MobiDB-lite"/>
    </source>
</evidence>
<evidence type="ECO:0000269" key="2">
    <source>
    </source>
</evidence>
<evidence type="ECO:0000269" key="3">
    <source>
    </source>
</evidence>
<evidence type="ECO:0000269" key="4">
    <source>
    </source>
</evidence>
<evidence type="ECO:0000269" key="5">
    <source>
    </source>
</evidence>
<evidence type="ECO:0000269" key="6">
    <source>
    </source>
</evidence>
<evidence type="ECO:0000269" key="7">
    <source>
    </source>
</evidence>
<evidence type="ECO:0000305" key="8"/>
<protein>
    <recommendedName>
        <fullName>Temperature shock-inducible protein 1</fullName>
        <ecNumber>3.1.1.-</ecNumber>
    </recommendedName>
</protein>
<proteinExistence type="evidence at protein level"/>
<keyword id="KW-0134">Cell wall</keyword>
<keyword id="KW-0903">Direct protein sequencing</keyword>
<keyword id="KW-0325">Glycoprotein</keyword>
<keyword id="KW-0336">GPI-anchor</keyword>
<keyword id="KW-0378">Hydrolase</keyword>
<keyword id="KW-0449">Lipoprotein</keyword>
<keyword id="KW-0472">Membrane</keyword>
<keyword id="KW-1185">Reference proteome</keyword>
<keyword id="KW-0964">Secreted</keyword>
<keyword id="KW-0732">Signal</keyword>
<keyword id="KW-0346">Stress response</keyword>
<name>TIP1_YEAST</name>